<reference key="1">
    <citation type="journal article" date="2000" name="Microbiology">
        <title>Genes for the synthesis of the osmoprotectant glycine betaine from choline in the moderately halophilic bacterium Halomonas elongata DSM 3043.</title>
        <authorList>
            <person name="Canovas D."/>
            <person name="Vargas C."/>
            <person name="Kneip S."/>
            <person name="Moron M.J."/>
            <person name="Ventosa A."/>
            <person name="Bremer E."/>
            <person name="Nieto J.J."/>
        </authorList>
    </citation>
    <scope>NUCLEOTIDE SEQUENCE [GENOMIC DNA]</scope>
</reference>
<gene>
    <name evidence="2" type="primary">betI2</name>
    <name type="synonym">betI</name>
</gene>
<dbReference type="EMBL" id="AJ238780">
    <property type="protein sequence ID" value="CAB77174.1"/>
    <property type="molecule type" value="Genomic_DNA"/>
</dbReference>
<dbReference type="SMR" id="Q9L4K2"/>
<dbReference type="UniPathway" id="UPA00529"/>
<dbReference type="GO" id="GO:0003700">
    <property type="term" value="F:DNA-binding transcription factor activity"/>
    <property type="evidence" value="ECO:0007669"/>
    <property type="project" value="UniProtKB-UniRule"/>
</dbReference>
<dbReference type="GO" id="GO:0000976">
    <property type="term" value="F:transcription cis-regulatory region binding"/>
    <property type="evidence" value="ECO:0007669"/>
    <property type="project" value="TreeGrafter"/>
</dbReference>
<dbReference type="GO" id="GO:0019285">
    <property type="term" value="P:glycine betaine biosynthetic process from choline"/>
    <property type="evidence" value="ECO:0007669"/>
    <property type="project" value="UniProtKB-UniRule"/>
</dbReference>
<dbReference type="GO" id="GO:0045892">
    <property type="term" value="P:negative regulation of DNA-templated transcription"/>
    <property type="evidence" value="ECO:0007669"/>
    <property type="project" value="UniProtKB-UniRule"/>
</dbReference>
<dbReference type="Gene3D" id="1.10.357.10">
    <property type="entry name" value="Tetracycline Repressor, domain 2"/>
    <property type="match status" value="1"/>
</dbReference>
<dbReference type="HAMAP" id="MF_00768">
    <property type="entry name" value="HTH_type_BetI"/>
    <property type="match status" value="1"/>
</dbReference>
<dbReference type="InterPro" id="IPR039538">
    <property type="entry name" value="BetI_C"/>
</dbReference>
<dbReference type="InterPro" id="IPR023772">
    <property type="entry name" value="DNA-bd_HTH_TetR-type_CS"/>
</dbReference>
<dbReference type="InterPro" id="IPR009057">
    <property type="entry name" value="Homeodomain-like_sf"/>
</dbReference>
<dbReference type="InterPro" id="IPR050109">
    <property type="entry name" value="HTH-type_TetR-like_transc_reg"/>
</dbReference>
<dbReference type="InterPro" id="IPR001647">
    <property type="entry name" value="HTH_TetR"/>
</dbReference>
<dbReference type="InterPro" id="IPR036271">
    <property type="entry name" value="Tet_transcr_reg_TetR-rel_C_sf"/>
</dbReference>
<dbReference type="InterPro" id="IPR017757">
    <property type="entry name" value="Tscrpt_rep_BetI"/>
</dbReference>
<dbReference type="NCBIfam" id="TIGR03384">
    <property type="entry name" value="betaine_BetI"/>
    <property type="match status" value="1"/>
</dbReference>
<dbReference type="NCBIfam" id="NF001978">
    <property type="entry name" value="PRK00767.1"/>
    <property type="match status" value="1"/>
</dbReference>
<dbReference type="PANTHER" id="PTHR30055:SF234">
    <property type="entry name" value="HTH-TYPE TRANSCRIPTIONAL REGULATOR BETI"/>
    <property type="match status" value="1"/>
</dbReference>
<dbReference type="PANTHER" id="PTHR30055">
    <property type="entry name" value="HTH-TYPE TRANSCRIPTIONAL REGULATOR RUTR"/>
    <property type="match status" value="1"/>
</dbReference>
<dbReference type="Pfam" id="PF13977">
    <property type="entry name" value="TetR_C_6"/>
    <property type="match status" value="1"/>
</dbReference>
<dbReference type="Pfam" id="PF00440">
    <property type="entry name" value="TetR_N"/>
    <property type="match status" value="1"/>
</dbReference>
<dbReference type="SUPFAM" id="SSF46689">
    <property type="entry name" value="Homeodomain-like"/>
    <property type="match status" value="1"/>
</dbReference>
<dbReference type="SUPFAM" id="SSF48498">
    <property type="entry name" value="Tetracyclin repressor-like, C-terminal domain"/>
    <property type="match status" value="1"/>
</dbReference>
<dbReference type="PROSITE" id="PS01081">
    <property type="entry name" value="HTH_TETR_1"/>
    <property type="match status" value="1"/>
</dbReference>
<dbReference type="PROSITE" id="PS50977">
    <property type="entry name" value="HTH_TETR_2"/>
    <property type="match status" value="1"/>
</dbReference>
<evidence type="ECO:0000250" key="1"/>
<evidence type="ECO:0000255" key="2">
    <source>
        <dbReference type="HAMAP-Rule" id="MF_00768"/>
    </source>
</evidence>
<feature type="chain" id="PRO_0000070583" description="HTH-type transcriptional regulator BetI 2">
    <location>
        <begin position="1"/>
        <end position="207"/>
    </location>
</feature>
<feature type="domain" description="HTH tetR-type" evidence="2">
    <location>
        <begin position="8"/>
        <end position="68"/>
    </location>
</feature>
<feature type="DNA-binding region" description="H-T-H motif" evidence="2">
    <location>
        <begin position="31"/>
        <end position="50"/>
    </location>
</feature>
<accession>Q9L4K2</accession>
<sequence length="207" mass="22858">MPKVGMEPIRRQQLIKATMAAIDEVGLAEATVMRIARHAGVSAGIISHYFGGKDGLLEATMRQILTDLSDAVAARRHALEDDSPRAHIGAIIEGNFDRTQVTGPAAKTWLAFWASSMHKPVLQRLQYVNDRRLYANLCHQFQRVMPKADARNAARGLAAMIDGLWLRGALTPEGLDAAEARYLAHTYLDQLLTHYGCYQDASTADFK</sequence>
<proteinExistence type="inferred from homology"/>
<keyword id="KW-0238">DNA-binding</keyword>
<keyword id="KW-0678">Repressor</keyword>
<keyword id="KW-0804">Transcription</keyword>
<keyword id="KW-0805">Transcription regulation</keyword>
<protein>
    <recommendedName>
        <fullName evidence="2">HTH-type transcriptional regulator BetI 2</fullName>
    </recommendedName>
</protein>
<organism>
    <name type="scientific">Chromohalobacter salexigens (strain ATCC BAA-138 / DSM 3043 / CIP 106854 / NCIMB 13768 / 1H11)</name>
    <dbReference type="NCBI Taxonomy" id="290398"/>
    <lineage>
        <taxon>Bacteria</taxon>
        <taxon>Pseudomonadati</taxon>
        <taxon>Pseudomonadota</taxon>
        <taxon>Gammaproteobacteria</taxon>
        <taxon>Oceanospirillales</taxon>
        <taxon>Halomonadaceae</taxon>
        <taxon>Chromohalobacter</taxon>
    </lineage>
</organism>
<name>BETI2_CHRSD</name>
<comment type="function">
    <text evidence="1">Repressor involved in the biosynthesis of the osmoprotectant glycine betaine. It represses transcription of the choline transporter BetT and the genes of BetAB involved in the synthesis of glycine betaine (By similarity).</text>
</comment>
<comment type="pathway">
    <text>Amine and polyamine biosynthesis; betaine biosynthesis via choline pathway [regulation].</text>
</comment>